<reference key="1">
    <citation type="journal article" date="1980" name="Hoppe-Seyler's Z. Physiol. Chem.">
        <title>Snake venoms. The amino acid sequences of two Melanoleuca-type toxins.</title>
        <authorList>
            <person name="Joubert F.J."/>
            <person name="Taljaard N."/>
        </authorList>
    </citation>
    <scope>PROTEIN SEQUENCE</scope>
    <scope>TOXIC DOSE</scope>
    <scope>SUBCELLULAR LOCATION</scope>
    <source>
        <tissue>Venom</tissue>
    </source>
</reference>
<comment type="function">
    <text evidence="1">Binds with low affinity to muscular (alpha-1-beta-1-delta-epsilon/CHRNA1-CHRNB1-CHRND-CHRNE) and very low affinity to neuronal (alpha-7/CHRNA7) nicotinic acetylcholine receptor (nAChR).</text>
</comment>
<comment type="subcellular location">
    <subcellularLocation>
        <location evidence="3">Secreted</location>
    </subcellularLocation>
</comment>
<comment type="tissue specificity">
    <text evidence="4">Expressed by the venom gland.</text>
</comment>
<comment type="toxic dose">
    <text evidence="3">LD(50) is 16 mg/kg by intravenous injection.</text>
</comment>
<comment type="similarity">
    <text evidence="4">Belongs to the three-finger toxin family. Ancestral subfamily. Orphan group II sub-subfamily.</text>
</comment>
<sequence>LRCLNCPEVFCRNFHTCRNGEKICFKRFDQRKLLGKRYTRGCAVTCPVAKPREIVECCSTDGCNR</sequence>
<protein>
    <recommendedName>
        <fullName>Weak toxin CM-10</fullName>
    </recommendedName>
</protein>
<accession>P25680</accession>
<keyword id="KW-0903">Direct protein sequencing</keyword>
<keyword id="KW-1015">Disulfide bond</keyword>
<keyword id="KW-0964">Secreted</keyword>
<keyword id="KW-0800">Toxin</keyword>
<name>3NO2A_NAJNI</name>
<evidence type="ECO:0000250" key="1">
    <source>
        <dbReference type="UniProtKB" id="O42255"/>
    </source>
</evidence>
<evidence type="ECO:0000250" key="2">
    <source>
        <dbReference type="UniProtKB" id="Q8AY51"/>
    </source>
</evidence>
<evidence type="ECO:0000269" key="3">
    <source>
    </source>
</evidence>
<evidence type="ECO:0000305" key="4"/>
<proteinExistence type="evidence at protein level"/>
<organism>
    <name type="scientific">Naja nivea</name>
    <name type="common">Cape cobra</name>
    <name type="synonym">Coluber niveus</name>
    <dbReference type="NCBI Taxonomy" id="8655"/>
    <lineage>
        <taxon>Eukaryota</taxon>
        <taxon>Metazoa</taxon>
        <taxon>Chordata</taxon>
        <taxon>Craniata</taxon>
        <taxon>Vertebrata</taxon>
        <taxon>Euteleostomi</taxon>
        <taxon>Lepidosauria</taxon>
        <taxon>Squamata</taxon>
        <taxon>Bifurcata</taxon>
        <taxon>Unidentata</taxon>
        <taxon>Episquamata</taxon>
        <taxon>Toxicofera</taxon>
        <taxon>Serpentes</taxon>
        <taxon>Colubroidea</taxon>
        <taxon>Elapidae</taxon>
        <taxon>Elapinae</taxon>
        <taxon>Naja</taxon>
    </lineage>
</organism>
<feature type="chain" id="PRO_0000093633" description="Weak toxin CM-10" evidence="3">
    <location>
        <begin position="1"/>
        <end position="65"/>
    </location>
</feature>
<feature type="disulfide bond" evidence="2">
    <location>
        <begin position="3"/>
        <end position="24"/>
    </location>
</feature>
<feature type="disulfide bond" evidence="2">
    <location>
        <begin position="6"/>
        <end position="11"/>
    </location>
</feature>
<feature type="disulfide bond" evidence="2">
    <location>
        <begin position="17"/>
        <end position="42"/>
    </location>
</feature>
<feature type="disulfide bond" evidence="2">
    <location>
        <begin position="46"/>
        <end position="57"/>
    </location>
</feature>
<feature type="disulfide bond" evidence="2">
    <location>
        <begin position="58"/>
        <end position="63"/>
    </location>
</feature>
<dbReference type="SMR" id="P25680"/>
<dbReference type="GO" id="GO:0005576">
    <property type="term" value="C:extracellular region"/>
    <property type="evidence" value="ECO:0007669"/>
    <property type="project" value="UniProtKB-SubCell"/>
</dbReference>
<dbReference type="GO" id="GO:0090729">
    <property type="term" value="F:toxin activity"/>
    <property type="evidence" value="ECO:0007669"/>
    <property type="project" value="UniProtKB-KW"/>
</dbReference>
<dbReference type="CDD" id="cd00206">
    <property type="entry name" value="TFP_snake_toxin"/>
    <property type="match status" value="1"/>
</dbReference>
<dbReference type="FunFam" id="2.10.60.10:FF:000024">
    <property type="entry name" value="Cytotoxin 1"/>
    <property type="match status" value="1"/>
</dbReference>
<dbReference type="Gene3D" id="2.10.60.10">
    <property type="entry name" value="CD59"/>
    <property type="match status" value="1"/>
</dbReference>
<dbReference type="InterPro" id="IPR003571">
    <property type="entry name" value="Snake_3FTx"/>
</dbReference>
<dbReference type="InterPro" id="IPR045860">
    <property type="entry name" value="Snake_toxin-like_sf"/>
</dbReference>
<dbReference type="InterPro" id="IPR018354">
    <property type="entry name" value="Snake_toxin_con_site"/>
</dbReference>
<dbReference type="InterPro" id="IPR054131">
    <property type="entry name" value="Toxin_cobra-type"/>
</dbReference>
<dbReference type="Pfam" id="PF21947">
    <property type="entry name" value="Toxin_cobra-type"/>
    <property type="match status" value="1"/>
</dbReference>
<dbReference type="SUPFAM" id="SSF57302">
    <property type="entry name" value="Snake toxin-like"/>
    <property type="match status" value="1"/>
</dbReference>
<dbReference type="PROSITE" id="PS00272">
    <property type="entry name" value="SNAKE_TOXIN"/>
    <property type="match status" value="1"/>
</dbReference>